<proteinExistence type="inferred from homology"/>
<protein>
    <recommendedName>
        <fullName>E3 ubiquitin-protein ligase BRE1</fullName>
        <ecNumber evidence="1">2.3.2.27</ecNumber>
    </recommendedName>
    <alternativeName>
        <fullName evidence="5">RING-type E3 ubiquitin transferase BRE1</fullName>
    </alternativeName>
</protein>
<feature type="chain" id="PRO_0000055852" description="E3 ubiquitin-protein ligase BRE1">
    <location>
        <begin position="1"/>
        <end position="703"/>
    </location>
</feature>
<feature type="zinc finger region" description="RING-type" evidence="3">
    <location>
        <begin position="651"/>
        <end position="690"/>
    </location>
</feature>
<feature type="region of interest" description="Disordered" evidence="4">
    <location>
        <begin position="1"/>
        <end position="35"/>
    </location>
</feature>
<feature type="region of interest" description="Disordered" evidence="4">
    <location>
        <begin position="213"/>
        <end position="246"/>
    </location>
</feature>
<feature type="coiled-coil region" evidence="2">
    <location>
        <begin position="49"/>
        <end position="75"/>
    </location>
</feature>
<feature type="coiled-coil region" evidence="2">
    <location>
        <begin position="170"/>
        <end position="459"/>
    </location>
</feature>
<feature type="coiled-coil region" evidence="2">
    <location>
        <begin position="512"/>
        <end position="569"/>
    </location>
</feature>
<feature type="coiled-coil region" evidence="2">
    <location>
        <begin position="603"/>
        <end position="635"/>
    </location>
</feature>
<feature type="compositionally biased region" description="Polar residues" evidence="4">
    <location>
        <begin position="214"/>
        <end position="246"/>
    </location>
</feature>
<sequence>MEDRKRPAISSADEIAPPSKRVAVNGSKAKDDPLDMKEESWVEAYTKGAIYRQMQEYSRKASTYESRLEELHKRSVHHDDHLRIIDAWWRQVLDEMELLLADSGVTSQTPSEPPYLSSVSFKDLHDFQKHLSEKGKGIKLRAEAILARLASSRGSIKPDAAKLESKVAGLLAAQKEYFAKLDRLKTEKDQLSEQLNAATLRYFKAEKKLDRAKSSQVQKMEQQAFANATRPSASGDVNTDSGETNGNSGELLLKYEEATAAATKQKEQLDVFLAEIKALQDENSTLKAKRDTLTDEDFIRTDVFKQFKNQNEDLIKRINTLEATNKQLREEAERLQAERTAFRTMLEADANQVTQELESEIILRDQDLARVRSARDELLAETTQHKARLDQERASVEQVKALASAKEDRITALESQLSRLQQSETQQAVSPDIEALTVEELRLKYTKLQQDFDSINMELPAIEKAYKKMKELAHRKAMDFSATEERMSILIAEKSKADQKYFAARKDADTRNNEIRSLRHQNSKSSEIIAQLKDLESQNRVLLGNLEKQLTDLKQSNASLMTENKKMEVTSLDAVRRTESLNKQVSDLSNLVKSKDAASAVVRERNVMQETEVEKMKVRLEHAQKDRDNWKNKALSNSSEEEEMLRTFALCTICRNNFKNTALKTCGHLFCNQCVDDRISNRMRKCPTCSRAFDKMDVMPVHH</sequence>
<accession>Q4I7N9</accession>
<accession>A0A0E0SCG0</accession>
<accession>V6RER5</accession>
<organism>
    <name type="scientific">Gibberella zeae (strain ATCC MYA-4620 / CBS 123657 / FGSC 9075 / NRRL 31084 / PH-1)</name>
    <name type="common">Wheat head blight fungus</name>
    <name type="synonym">Fusarium graminearum</name>
    <dbReference type="NCBI Taxonomy" id="229533"/>
    <lineage>
        <taxon>Eukaryota</taxon>
        <taxon>Fungi</taxon>
        <taxon>Dikarya</taxon>
        <taxon>Ascomycota</taxon>
        <taxon>Pezizomycotina</taxon>
        <taxon>Sordariomycetes</taxon>
        <taxon>Hypocreomycetidae</taxon>
        <taxon>Hypocreales</taxon>
        <taxon>Nectriaceae</taxon>
        <taxon>Fusarium</taxon>
    </lineage>
</organism>
<reference key="1">
    <citation type="journal article" date="2007" name="Science">
        <title>The Fusarium graminearum genome reveals a link between localized polymorphism and pathogen specialization.</title>
        <authorList>
            <person name="Cuomo C.A."/>
            <person name="Gueldener U."/>
            <person name="Xu J.-R."/>
            <person name="Trail F."/>
            <person name="Turgeon B.G."/>
            <person name="Di Pietro A."/>
            <person name="Walton J.D."/>
            <person name="Ma L.-J."/>
            <person name="Baker S.E."/>
            <person name="Rep M."/>
            <person name="Adam G."/>
            <person name="Antoniw J."/>
            <person name="Baldwin T."/>
            <person name="Calvo S.E."/>
            <person name="Chang Y.-L."/>
            <person name="DeCaprio D."/>
            <person name="Gale L.R."/>
            <person name="Gnerre S."/>
            <person name="Goswami R.S."/>
            <person name="Hammond-Kosack K."/>
            <person name="Harris L.J."/>
            <person name="Hilburn K."/>
            <person name="Kennell J.C."/>
            <person name="Kroken S."/>
            <person name="Magnuson J.K."/>
            <person name="Mannhaupt G."/>
            <person name="Mauceli E.W."/>
            <person name="Mewes H.-W."/>
            <person name="Mitterbauer R."/>
            <person name="Muehlbauer G."/>
            <person name="Muensterkoetter M."/>
            <person name="Nelson D."/>
            <person name="O'Donnell K."/>
            <person name="Ouellet T."/>
            <person name="Qi W."/>
            <person name="Quesneville H."/>
            <person name="Roncero M.I.G."/>
            <person name="Seong K.-Y."/>
            <person name="Tetko I.V."/>
            <person name="Urban M."/>
            <person name="Waalwijk C."/>
            <person name="Ward T.J."/>
            <person name="Yao J."/>
            <person name="Birren B.W."/>
            <person name="Kistler H.C."/>
        </authorList>
    </citation>
    <scope>NUCLEOTIDE SEQUENCE [LARGE SCALE GENOMIC DNA]</scope>
    <source>
        <strain>ATCC MYA-4620 / CBS 123657 / FGSC 9075 / NRRL 31084 / PH-1</strain>
    </source>
</reference>
<reference key="2">
    <citation type="journal article" date="2010" name="Nature">
        <title>Comparative genomics reveals mobile pathogenicity chromosomes in Fusarium.</title>
        <authorList>
            <person name="Ma L.-J."/>
            <person name="van der Does H.C."/>
            <person name="Borkovich K.A."/>
            <person name="Coleman J.J."/>
            <person name="Daboussi M.-J."/>
            <person name="Di Pietro A."/>
            <person name="Dufresne M."/>
            <person name="Freitag M."/>
            <person name="Grabherr M."/>
            <person name="Henrissat B."/>
            <person name="Houterman P.M."/>
            <person name="Kang S."/>
            <person name="Shim W.-B."/>
            <person name="Woloshuk C."/>
            <person name="Xie X."/>
            <person name="Xu J.-R."/>
            <person name="Antoniw J."/>
            <person name="Baker S.E."/>
            <person name="Bluhm B.H."/>
            <person name="Breakspear A."/>
            <person name="Brown D.W."/>
            <person name="Butchko R.A.E."/>
            <person name="Chapman S."/>
            <person name="Coulson R."/>
            <person name="Coutinho P.M."/>
            <person name="Danchin E.G.J."/>
            <person name="Diener A."/>
            <person name="Gale L.R."/>
            <person name="Gardiner D.M."/>
            <person name="Goff S."/>
            <person name="Hammond-Kosack K.E."/>
            <person name="Hilburn K."/>
            <person name="Hua-Van A."/>
            <person name="Jonkers W."/>
            <person name="Kazan K."/>
            <person name="Kodira C.D."/>
            <person name="Koehrsen M."/>
            <person name="Kumar L."/>
            <person name="Lee Y.-H."/>
            <person name="Li L."/>
            <person name="Manners J.M."/>
            <person name="Miranda-Saavedra D."/>
            <person name="Mukherjee M."/>
            <person name="Park G."/>
            <person name="Park J."/>
            <person name="Park S.-Y."/>
            <person name="Proctor R.H."/>
            <person name="Regev A."/>
            <person name="Ruiz-Roldan M.C."/>
            <person name="Sain D."/>
            <person name="Sakthikumar S."/>
            <person name="Sykes S."/>
            <person name="Schwartz D.C."/>
            <person name="Turgeon B.G."/>
            <person name="Wapinski I."/>
            <person name="Yoder O."/>
            <person name="Young S."/>
            <person name="Zeng Q."/>
            <person name="Zhou S."/>
            <person name="Galagan J."/>
            <person name="Cuomo C.A."/>
            <person name="Kistler H.C."/>
            <person name="Rep M."/>
        </authorList>
    </citation>
    <scope>GENOME REANNOTATION</scope>
    <source>
        <strain>ATCC MYA-4620 / CBS 123657 / FGSC 9075 / NRRL 31084 / PH-1</strain>
    </source>
</reference>
<reference key="3">
    <citation type="journal article" date="2015" name="BMC Genomics">
        <title>The completed genome sequence of the pathogenic ascomycete fungus Fusarium graminearum.</title>
        <authorList>
            <person name="King R."/>
            <person name="Urban M."/>
            <person name="Hammond-Kosack M.C.U."/>
            <person name="Hassani-Pak K."/>
            <person name="Hammond-Kosack K.E."/>
        </authorList>
    </citation>
    <scope>NUCLEOTIDE SEQUENCE [LARGE SCALE GENOMIC DNA]</scope>
    <source>
        <strain>ATCC MYA-4620 / CBS 123657 / FGSC 9075 / NRRL 31084 / PH-1</strain>
    </source>
</reference>
<name>BRE1_GIBZE</name>
<comment type="function">
    <text evidence="1">E3 ubiquitin-protein ligase that mediates monoubiquitination of histone H2B to form H2BK123ub1. H2BK123ub1 gives a specific tag for epigenetic transcriptional activation and is also a prerequisite for H3K4me and H3K79me formation.</text>
</comment>
<comment type="catalytic activity">
    <reaction evidence="1">
        <text>S-ubiquitinyl-[E2 ubiquitin-conjugating enzyme]-L-cysteine + [acceptor protein]-L-lysine = [E2 ubiquitin-conjugating enzyme]-L-cysteine + N(6)-ubiquitinyl-[acceptor protein]-L-lysine.</text>
        <dbReference type="EC" id="2.3.2.27"/>
    </reaction>
</comment>
<comment type="pathway">
    <text>Protein modification; protein ubiquitination.</text>
</comment>
<comment type="subcellular location">
    <subcellularLocation>
        <location evidence="1">Nucleus</location>
    </subcellularLocation>
</comment>
<comment type="similarity">
    <text evidence="5">Belongs to the BRE1 family.</text>
</comment>
<dbReference type="EC" id="2.3.2.27" evidence="1"/>
<dbReference type="EMBL" id="DS231666">
    <property type="protein sequence ID" value="ESU12911.1"/>
    <property type="molecule type" value="Genomic_DNA"/>
</dbReference>
<dbReference type="EMBL" id="HG970335">
    <property type="protein sequence ID" value="CEF84123.1"/>
    <property type="molecule type" value="Genomic_DNA"/>
</dbReference>
<dbReference type="RefSeq" id="XP_011326418.1">
    <property type="nucleotide sequence ID" value="XM_011328116.1"/>
</dbReference>
<dbReference type="SMR" id="Q4I7N9"/>
<dbReference type="FunCoup" id="Q4I7N9">
    <property type="interactions" value="904"/>
</dbReference>
<dbReference type="STRING" id="229533.Q4I7N9"/>
<dbReference type="GeneID" id="23553884"/>
<dbReference type="KEGG" id="fgr:FGSG_06769"/>
<dbReference type="VEuPathDB" id="FungiDB:FGRAMPH1_01G23141"/>
<dbReference type="eggNOG" id="KOG0978">
    <property type="taxonomic scope" value="Eukaryota"/>
</dbReference>
<dbReference type="HOGENOM" id="CLU_019713_2_0_1"/>
<dbReference type="InParanoid" id="Q4I7N9"/>
<dbReference type="OrthoDB" id="115045at110618"/>
<dbReference type="UniPathway" id="UPA00143"/>
<dbReference type="Proteomes" id="UP000070720">
    <property type="component" value="Chromosome 4"/>
</dbReference>
<dbReference type="GO" id="GO:0033503">
    <property type="term" value="C:HULC complex"/>
    <property type="evidence" value="ECO:0007669"/>
    <property type="project" value="TreeGrafter"/>
</dbReference>
<dbReference type="GO" id="GO:0005634">
    <property type="term" value="C:nucleus"/>
    <property type="evidence" value="ECO:0007669"/>
    <property type="project" value="UniProtKB-SubCell"/>
</dbReference>
<dbReference type="GO" id="GO:0061630">
    <property type="term" value="F:ubiquitin protein ligase activity"/>
    <property type="evidence" value="ECO:0007669"/>
    <property type="project" value="TreeGrafter"/>
</dbReference>
<dbReference type="GO" id="GO:0008270">
    <property type="term" value="F:zinc ion binding"/>
    <property type="evidence" value="ECO:0007669"/>
    <property type="project" value="UniProtKB-KW"/>
</dbReference>
<dbReference type="GO" id="GO:0006325">
    <property type="term" value="P:chromatin organization"/>
    <property type="evidence" value="ECO:0007669"/>
    <property type="project" value="UniProtKB-KW"/>
</dbReference>
<dbReference type="GO" id="GO:0016567">
    <property type="term" value="P:protein ubiquitination"/>
    <property type="evidence" value="ECO:0007669"/>
    <property type="project" value="UniProtKB-UniPathway"/>
</dbReference>
<dbReference type="CDD" id="cd16499">
    <property type="entry name" value="RING-HC_Bre1-like"/>
    <property type="match status" value="1"/>
</dbReference>
<dbReference type="Gene3D" id="3.30.40.10">
    <property type="entry name" value="Zinc/RING finger domain, C3HC4 (zinc finger)"/>
    <property type="match status" value="1"/>
</dbReference>
<dbReference type="InterPro" id="IPR013956">
    <property type="entry name" value="E3_ubiquit_lig_Bre1"/>
</dbReference>
<dbReference type="InterPro" id="IPR001841">
    <property type="entry name" value="Znf_RING"/>
</dbReference>
<dbReference type="InterPro" id="IPR013083">
    <property type="entry name" value="Znf_RING/FYVE/PHD"/>
</dbReference>
<dbReference type="InterPro" id="IPR017907">
    <property type="entry name" value="Znf_RING_CS"/>
</dbReference>
<dbReference type="PANTHER" id="PTHR23163:SF0">
    <property type="entry name" value="E3 UBIQUITIN-PROTEIN LIGASE BRE1"/>
    <property type="match status" value="1"/>
</dbReference>
<dbReference type="PANTHER" id="PTHR23163">
    <property type="entry name" value="RING FINGER PROTEIN-RELATED"/>
    <property type="match status" value="1"/>
</dbReference>
<dbReference type="Pfam" id="PF08647">
    <property type="entry name" value="BRE1"/>
    <property type="match status" value="1"/>
</dbReference>
<dbReference type="Pfam" id="PF13920">
    <property type="entry name" value="zf-C3HC4_3"/>
    <property type="match status" value="1"/>
</dbReference>
<dbReference type="SMART" id="SM00184">
    <property type="entry name" value="RING"/>
    <property type="match status" value="1"/>
</dbReference>
<dbReference type="SUPFAM" id="SSF57850">
    <property type="entry name" value="RING/U-box"/>
    <property type="match status" value="1"/>
</dbReference>
<dbReference type="PROSITE" id="PS00518">
    <property type="entry name" value="ZF_RING_1"/>
    <property type="match status" value="1"/>
</dbReference>
<dbReference type="PROSITE" id="PS50089">
    <property type="entry name" value="ZF_RING_2"/>
    <property type="match status" value="1"/>
</dbReference>
<keyword id="KW-0156">Chromatin regulator</keyword>
<keyword id="KW-0175">Coiled coil</keyword>
<keyword id="KW-0479">Metal-binding</keyword>
<keyword id="KW-0539">Nucleus</keyword>
<keyword id="KW-1185">Reference proteome</keyword>
<keyword id="KW-0808">Transferase</keyword>
<keyword id="KW-0833">Ubl conjugation pathway</keyword>
<keyword id="KW-0862">Zinc</keyword>
<keyword id="KW-0863">Zinc-finger</keyword>
<evidence type="ECO:0000250" key="1">
    <source>
        <dbReference type="UniProtKB" id="Q07457"/>
    </source>
</evidence>
<evidence type="ECO:0000255" key="2"/>
<evidence type="ECO:0000255" key="3">
    <source>
        <dbReference type="PROSITE-ProRule" id="PRU00175"/>
    </source>
</evidence>
<evidence type="ECO:0000256" key="4">
    <source>
        <dbReference type="SAM" id="MobiDB-lite"/>
    </source>
</evidence>
<evidence type="ECO:0000305" key="5"/>
<gene>
    <name type="primary">BRE1</name>
    <name type="ORF">FGRRES_06769</name>
    <name type="ORF">FGSG_06769</name>
</gene>